<feature type="chain" id="PRO_0000197081" description="MYB-like transcription factor ODO1">
    <location>
        <begin position="1"/>
        <end position="294"/>
    </location>
</feature>
<feature type="domain" description="HTH myb-type 1" evidence="1">
    <location>
        <begin position="9"/>
        <end position="61"/>
    </location>
</feature>
<feature type="domain" description="HTH myb-type 2" evidence="1">
    <location>
        <begin position="62"/>
        <end position="116"/>
    </location>
</feature>
<feature type="DNA-binding region" description="H-T-H motif" evidence="1">
    <location>
        <begin position="37"/>
        <end position="61"/>
    </location>
</feature>
<feature type="DNA-binding region" description="H-T-H motif" evidence="1">
    <location>
        <begin position="89"/>
        <end position="112"/>
    </location>
</feature>
<feature type="region of interest" description="Disordered" evidence="2">
    <location>
        <begin position="128"/>
        <end position="152"/>
    </location>
</feature>
<feature type="region of interest" description="Disordered" evidence="2">
    <location>
        <begin position="171"/>
        <end position="191"/>
    </location>
</feature>
<protein>
    <recommendedName>
        <fullName evidence="11">MYB-like transcription factor ODO1</fullName>
    </recommendedName>
    <alternativeName>
        <fullName evidence="11">Protein ODORANT1</fullName>
        <shortName evidence="12">PhODO1</shortName>
    </alternativeName>
</protein>
<organism>
    <name type="scientific">Petunia hybrida</name>
    <name type="common">Petunia</name>
    <dbReference type="NCBI Taxonomy" id="4102"/>
    <lineage>
        <taxon>Eukaryota</taxon>
        <taxon>Viridiplantae</taxon>
        <taxon>Streptophyta</taxon>
        <taxon>Embryophyta</taxon>
        <taxon>Tracheophyta</taxon>
        <taxon>Spermatophyta</taxon>
        <taxon>Magnoliopsida</taxon>
        <taxon>eudicotyledons</taxon>
        <taxon>Gunneridae</taxon>
        <taxon>Pentapetalae</taxon>
        <taxon>asterids</taxon>
        <taxon>lamiids</taxon>
        <taxon>Solanales</taxon>
        <taxon>Solanaceae</taxon>
        <taxon>Petunioideae</taxon>
        <taxon>Petunia</taxon>
    </lineage>
</organism>
<accession>Q50EX6</accession>
<dbReference type="EMBL" id="AY705977">
    <property type="protein sequence ID" value="AAV98200.1"/>
    <property type="molecule type" value="mRNA"/>
</dbReference>
<dbReference type="SMR" id="Q50EX6"/>
<dbReference type="GO" id="GO:0005634">
    <property type="term" value="C:nucleus"/>
    <property type="evidence" value="ECO:0000314"/>
    <property type="project" value="UniProtKB"/>
</dbReference>
<dbReference type="GO" id="GO:0000976">
    <property type="term" value="F:transcription cis-regulatory region binding"/>
    <property type="evidence" value="ECO:0000314"/>
    <property type="project" value="UniProtKB"/>
</dbReference>
<dbReference type="GO" id="GO:0009423">
    <property type="term" value="P:chorismate biosynthetic process"/>
    <property type="evidence" value="ECO:0000315"/>
    <property type="project" value="UniProtKB"/>
</dbReference>
<dbReference type="GO" id="GO:0007623">
    <property type="term" value="P:circadian rhythm"/>
    <property type="evidence" value="ECO:0000270"/>
    <property type="project" value="UniProtKB"/>
</dbReference>
<dbReference type="GO" id="GO:0010597">
    <property type="term" value="P:green leaf volatile biosynthetic process"/>
    <property type="evidence" value="ECO:0000314"/>
    <property type="project" value="UniProtKB"/>
</dbReference>
<dbReference type="GO" id="GO:0006355">
    <property type="term" value="P:regulation of DNA-templated transcription"/>
    <property type="evidence" value="ECO:0000315"/>
    <property type="project" value="UniProtKB"/>
</dbReference>
<dbReference type="GO" id="GO:0010468">
    <property type="term" value="P:regulation of gene expression"/>
    <property type="evidence" value="ECO:0000315"/>
    <property type="project" value="UniProtKB"/>
</dbReference>
<dbReference type="CDD" id="cd00167">
    <property type="entry name" value="SANT"/>
    <property type="match status" value="2"/>
</dbReference>
<dbReference type="FunFam" id="1.10.10.60:FF:000069">
    <property type="entry name" value="MYB transcription factor"/>
    <property type="match status" value="1"/>
</dbReference>
<dbReference type="FunFam" id="1.10.10.60:FF:000303">
    <property type="entry name" value="MYB transcription factor"/>
    <property type="match status" value="1"/>
</dbReference>
<dbReference type="Gene3D" id="1.10.10.60">
    <property type="entry name" value="Homeodomain-like"/>
    <property type="match status" value="2"/>
</dbReference>
<dbReference type="InterPro" id="IPR009057">
    <property type="entry name" value="Homeodomain-like_sf"/>
</dbReference>
<dbReference type="InterPro" id="IPR017930">
    <property type="entry name" value="Myb_dom"/>
</dbReference>
<dbReference type="InterPro" id="IPR015495">
    <property type="entry name" value="Myb_TF_plants"/>
</dbReference>
<dbReference type="InterPro" id="IPR001005">
    <property type="entry name" value="SANT/Myb"/>
</dbReference>
<dbReference type="PANTHER" id="PTHR47994">
    <property type="entry name" value="F14D16.11-RELATED"/>
    <property type="match status" value="1"/>
</dbReference>
<dbReference type="PANTHER" id="PTHR47994:SF5">
    <property type="entry name" value="F14D16.11-RELATED"/>
    <property type="match status" value="1"/>
</dbReference>
<dbReference type="Pfam" id="PF00249">
    <property type="entry name" value="Myb_DNA-binding"/>
    <property type="match status" value="2"/>
</dbReference>
<dbReference type="SMART" id="SM00717">
    <property type="entry name" value="SANT"/>
    <property type="match status" value="2"/>
</dbReference>
<dbReference type="SUPFAM" id="SSF46689">
    <property type="entry name" value="Homeodomain-like"/>
    <property type="match status" value="1"/>
</dbReference>
<dbReference type="PROSITE" id="PS51294">
    <property type="entry name" value="HTH_MYB"/>
    <property type="match status" value="2"/>
</dbReference>
<keyword id="KW-0010">Activator</keyword>
<keyword id="KW-0090">Biological rhythms</keyword>
<keyword id="KW-0238">DNA-binding</keyword>
<keyword id="KW-0539">Nucleus</keyword>
<keyword id="KW-0677">Repeat</keyword>
<keyword id="KW-0804">Transcription</keyword>
<keyword id="KW-0805">Transcription regulation</keyword>
<name>ODO1_PETHY</name>
<reference key="1">
    <citation type="journal article" date="2005" name="Plant Cell">
        <title>ODORANT1 regulates fragrance biosynthesis in petunia flowers.</title>
        <authorList>
            <person name="Verdonk J.C."/>
            <person name="Haring M.A."/>
            <person name="van Tunen A.J."/>
            <person name="Schuurink R.C."/>
        </authorList>
    </citation>
    <scope>NUCLEOTIDE SEQUENCE [MRNA]</scope>
    <scope>FUNCTION</scope>
    <scope>DISRUPTION PHENOTYPE</scope>
    <scope>TISSUE SPECIFICITY</scope>
    <scope>DEVELOPMENTAL STAGE</scope>
    <scope>INDUCTION DURING SCENT EMISSION</scope>
    <source>
        <strain>cv. W115</strain>
    </source>
</reference>
<reference key="2">
    <citation type="journal article" date="2011" name="Curr. Biol.">
        <title>Pollinator choice in Petunia depends on two major genetic Loci for floral scent production.</title>
        <authorList>
            <person name="Klahre U."/>
            <person name="Gurba A."/>
            <person name="Hermann K."/>
            <person name="Saxenhofer M."/>
            <person name="Bossolini E."/>
            <person name="Guerin P.M."/>
            <person name="Kuhlemeier C."/>
        </authorList>
    </citation>
    <scope>FUNCTION</scope>
</reference>
<reference key="3">
    <citation type="journal article" date="2011" name="Plant J.">
        <title>The transcription factor EMISSION OF BENZENOIDS II activates the MYB ODORANT1 promoter at a MYB binding site specific for fragrant petunias.</title>
        <authorList>
            <person name="Van Moerkercke A."/>
            <person name="Haring M.A."/>
            <person name="Schuurink R.C."/>
        </authorList>
    </citation>
    <scope>FUNCTION</scope>
    <scope>TISSUE SPECIFICITY</scope>
    <scope>INDUCTION BY EOBII</scope>
    <source>
        <strain>cv. Mitchell</strain>
        <strain>cv. R27</strain>
        <strain>cv. Violet 26</strain>
    </source>
</reference>
<reference key="4">
    <citation type="journal article" date="2012" name="J. Exp. Bot.">
        <title>Regulators of floral fragrance production and their target genes in petunia are not exclusively active in the epidermal cells of petals.</title>
        <authorList>
            <person name="Van Moerkercke A."/>
            <person name="Galvan-Ampudia C.S."/>
            <person name="Verdonk J.C."/>
            <person name="Haring M.A."/>
            <person name="Schuurink R.C."/>
        </authorList>
    </citation>
    <scope>FUNCTION</scope>
    <scope>TISSUE SPECIFICITY</scope>
    <scope>INDUCTION DURING SCENT EMISSION</scope>
    <scope>SUBCELLULAR LOCATION</scope>
    <source>
        <strain>cv. Mitchell</strain>
        <strain>cv. R27</strain>
    </source>
</reference>
<reference key="5">
    <citation type="journal article" date="2012" name="Plant Cell">
        <title>The R2R3-MYB-like regulatory factor EOBI, acting downstream of EOBII, regulates scent production by activating ODO1 and structural scent-related genes in petunia.</title>
        <authorList>
            <person name="Spitzer-Rimon B."/>
            <person name="Farhi M."/>
            <person name="Albo B."/>
            <person name="Cna'ani A."/>
            <person name="Ben Zvi M.M."/>
            <person name="Masci T."/>
            <person name="Edelbaum O."/>
            <person name="Yu Y."/>
            <person name="Shklarman E."/>
            <person name="Ovadis M."/>
            <person name="Vainstein A."/>
        </authorList>
    </citation>
    <scope>FUNCTION</scope>
    <scope>DISRUPTION PHENOTYPE</scope>
    <scope>INDUCTION BY EOBI</scope>
    <scope>GENE FAMILY</scope>
    <scope>NOMENCLATURE</scope>
    <source>
        <strain>cv. W115</strain>
    </source>
</reference>
<reference key="6">
    <citation type="journal article" date="2012" name="Plant Signal. Behav.">
        <title>A model for combinatorial regulation of the petunia R2R3-MYB transcription factor ODORANT1.</title>
        <authorList>
            <person name="Van Moerkercke A."/>
            <person name="Haring M.A."/>
            <person name="Schuurink R.C."/>
        </authorList>
    </citation>
    <scope>INDUCTION BY EOBII</scope>
    <source>
        <strain>cv. Mitchell</strain>
        <strain>cv. R27</strain>
    </source>
</reference>
<reference key="7">
    <citation type="journal article" date="2015" name="Proc. Natl. Acad. Sci. U.S.A.">
        <title>Circadian clock gene LATE ELONGATED HYPOCOTYL directly regulates the timing of floral scent emission in Petunia.</title>
        <authorList>
            <person name="Fenske M.P."/>
            <person name="Hewett Hazelton K.D."/>
            <person name="Hempton A.K."/>
            <person name="Shim J.S."/>
            <person name="Yamamoto B.M."/>
            <person name="Riffell J.A."/>
            <person name="Imaizumi T."/>
        </authorList>
    </citation>
    <scope>REPRESSION BY LHY</scope>
</reference>
<reference key="8">
    <citation type="journal article" date="2016" name="Plant Physiol.">
        <title>CCoAOMT down-regulation activates anthocyanin biosynthesis in petunia.</title>
        <authorList>
            <person name="Shaipulah N.F.M."/>
            <person name="Muhlemann J.K."/>
            <person name="Woodworth B.D."/>
            <person name="Van Moerkercke A."/>
            <person name="Verdonk J.C."/>
            <person name="Ramirez A.A."/>
            <person name="Haring M.A."/>
            <person name="Dudareva N."/>
            <person name="Schuurink R.C."/>
        </authorList>
    </citation>
    <scope>FUNCTION</scope>
    <scope>DISRUPTION PHENOTYPE</scope>
    <source>
        <strain>cv. Mitchell</strain>
        <tissue>Corolla</tissue>
    </source>
</reference>
<sequence>MGRQPCCDKLGVKKGPWTAEEDKKLISFILTNGQCCWRAVPKLAGLKRCGKSCRLRWTNYLRPDLKRGLLSDAEEKLVIDLHSRLGNRWSKIAARLPGRTDNEIKNHWNTHIKKKLLKMGIDPVTHEPLKKEANLSDQPTTESDQNKENGHQQVQVVPQSTNVTAAAATSTEFDNNSSFSSSASSSENSSCTTDESKLVFDNLSENDPLLSCLLEADTPLIDSPWEFPMSSTTTVEEPKSFDSIISNMTSWEDTFNWLSGYQEFGINDFGFDNCFNHVELDIFKTIDNVENRHG</sequence>
<proteinExistence type="evidence at transcript level"/>
<comment type="function">
    <text evidence="3 4 5 6 8 10">R2R3 MYB-type transcription factor controlling the production of volatile organic compounds (VOCs), including floral volatile benzenoids and phenylpropanoids (FVBP), in flowers of fragrant cultivars (e.g. cv. Mitchell and cv. V26) by regulating the shikimate pathway, via the activation of several genes (e.g. EPSPS, ADT1, PAL1, CFAT and CCoAOMT1) (PubMed:15805488, PubMed:21497087, PubMed:21585571, PubMed:26620524). This scent, mostly produced in the evening and night by the petals, attracts the pollinators (e.g. the night-active hawkmoth pollinator Manduca sexta) (PubMed:15805488, PubMed:21497087). Promotes the expression of ABCG1 in petals three hours before the onset of volatile scent emission (PubMed:22345641). Anthocyanins production is not controlled by ODO1 as color and scent are produced at different stages of development (PubMed:15805488). Seems to trigger a negative feed-back loop that represses the expression of EOBI (PubMed:23275577).</text>
</comment>
<comment type="subcellular location">
    <subcellularLocation>
        <location evidence="1 6">Nucleus</location>
    </subcellularLocation>
</comment>
<comment type="tissue specificity">
    <text evidence="3 5 6">Restricted to the petals, with the highest expression in the limb, probably in both epidermal and mesophyll cell layers.</text>
</comment>
<comment type="developmental stage">
    <text evidence="3">Expressed in mature flowers and decreases upon pollination.</text>
</comment>
<comment type="induction">
    <text evidence="3 5 6 7 8 9">In fragrant cultivars (e.g. cv. Mitchell and cv. V26), increases before the onset of volatile emission at the end of the light period, peaks at night and decreases when volatile emission declines early morning; this precise expression regulation of its promoter is tuned by EOBI and EOBII binding and activation to a MYB binding site (MBS) 5'-AAACCTAAT-3' and by LHY binding and repression to cis-regulatory evening elements.</text>
</comment>
<comment type="disruption phenotype">
    <text evidence="3 8 10">Reduced expression of genes involved in the biosynthesis of precursors from the shikimate pathway (e.g. PAL1, DAHPS, EPSPS, CCoAOMT1 and CM) thus leading to a lower accumulation of volatile benzenoids but seems to not affect the production of anthocyanins implicated in flower color (PubMed:15805488, PubMed:26620524). Increased levels of EOBI (PubMed:23275577).</text>
</comment>
<comment type="online information" name="Protein Spotlight">
    <link uri="https://www.proteinspotlight.org/back_issues/060"/>
    <text>The life of a whiff - Issue 60 of July 2005</text>
</comment>
<gene>
    <name evidence="11" type="primary">ODO1</name>
</gene>
<evidence type="ECO:0000255" key="1">
    <source>
        <dbReference type="PROSITE-ProRule" id="PRU00625"/>
    </source>
</evidence>
<evidence type="ECO:0000256" key="2">
    <source>
        <dbReference type="SAM" id="MobiDB-lite"/>
    </source>
</evidence>
<evidence type="ECO:0000269" key="3">
    <source>
    </source>
</evidence>
<evidence type="ECO:0000269" key="4">
    <source>
    </source>
</evidence>
<evidence type="ECO:0000269" key="5">
    <source>
    </source>
</evidence>
<evidence type="ECO:0000269" key="6">
    <source>
    </source>
</evidence>
<evidence type="ECO:0000269" key="7">
    <source>
    </source>
</evidence>
<evidence type="ECO:0000269" key="8">
    <source>
    </source>
</evidence>
<evidence type="ECO:0000269" key="9">
    <source>
    </source>
</evidence>
<evidence type="ECO:0000269" key="10">
    <source>
    </source>
</evidence>
<evidence type="ECO:0000303" key="11">
    <source>
    </source>
</evidence>
<evidence type="ECO:0000303" key="12">
    <source>
    </source>
</evidence>